<protein>
    <recommendedName>
        <fullName evidence="1">Aspartate--tRNA(Asp/Asn) ligase</fullName>
        <ecNumber evidence="1">6.1.1.23</ecNumber>
    </recommendedName>
    <alternativeName>
        <fullName evidence="1">Aspartyl-tRNA synthetase</fullName>
        <shortName evidence="1">AspRS</shortName>
    </alternativeName>
    <alternativeName>
        <fullName evidence="1">Non-discriminating aspartyl-tRNA synthetase</fullName>
        <shortName evidence="1">ND-AspRS</shortName>
    </alternativeName>
</protein>
<keyword id="KW-0030">Aminoacyl-tRNA synthetase</keyword>
<keyword id="KW-0067">ATP-binding</keyword>
<keyword id="KW-0963">Cytoplasm</keyword>
<keyword id="KW-0436">Ligase</keyword>
<keyword id="KW-0547">Nucleotide-binding</keyword>
<keyword id="KW-0648">Protein biosynthesis</keyword>
<keyword id="KW-1185">Reference proteome</keyword>
<dbReference type="EC" id="6.1.1.23" evidence="1"/>
<dbReference type="EMBL" id="CP000159">
    <property type="protein sequence ID" value="ABC43753.1"/>
    <property type="molecule type" value="Genomic_DNA"/>
</dbReference>
<dbReference type="RefSeq" id="WP_011404698.1">
    <property type="nucleotide sequence ID" value="NC_007677.1"/>
</dbReference>
<dbReference type="RefSeq" id="YP_446073.1">
    <property type="nucleotide sequence ID" value="NC_007677.1"/>
</dbReference>
<dbReference type="SMR" id="Q2S158"/>
<dbReference type="STRING" id="309807.SRU_1963"/>
<dbReference type="EnsemblBacteria" id="ABC43753">
    <property type="protein sequence ID" value="ABC43753"/>
    <property type="gene ID" value="SRU_1963"/>
</dbReference>
<dbReference type="KEGG" id="sru:SRU_1963"/>
<dbReference type="PATRIC" id="fig|309807.25.peg.2037"/>
<dbReference type="eggNOG" id="COG0173">
    <property type="taxonomic scope" value="Bacteria"/>
</dbReference>
<dbReference type="HOGENOM" id="CLU_014330_3_2_10"/>
<dbReference type="OrthoDB" id="9802326at2"/>
<dbReference type="Proteomes" id="UP000008674">
    <property type="component" value="Chromosome"/>
</dbReference>
<dbReference type="GO" id="GO:0005737">
    <property type="term" value="C:cytoplasm"/>
    <property type="evidence" value="ECO:0007669"/>
    <property type="project" value="UniProtKB-SubCell"/>
</dbReference>
<dbReference type="GO" id="GO:0004815">
    <property type="term" value="F:aspartate-tRNA ligase activity"/>
    <property type="evidence" value="ECO:0007669"/>
    <property type="project" value="UniProtKB-UniRule"/>
</dbReference>
<dbReference type="GO" id="GO:0050560">
    <property type="term" value="F:aspartate-tRNA(Asn) ligase activity"/>
    <property type="evidence" value="ECO:0007669"/>
    <property type="project" value="UniProtKB-EC"/>
</dbReference>
<dbReference type="GO" id="GO:0005524">
    <property type="term" value="F:ATP binding"/>
    <property type="evidence" value="ECO:0007669"/>
    <property type="project" value="UniProtKB-UniRule"/>
</dbReference>
<dbReference type="GO" id="GO:0003676">
    <property type="term" value="F:nucleic acid binding"/>
    <property type="evidence" value="ECO:0007669"/>
    <property type="project" value="InterPro"/>
</dbReference>
<dbReference type="GO" id="GO:0006422">
    <property type="term" value="P:aspartyl-tRNA aminoacylation"/>
    <property type="evidence" value="ECO:0007669"/>
    <property type="project" value="UniProtKB-UniRule"/>
</dbReference>
<dbReference type="CDD" id="cd00777">
    <property type="entry name" value="AspRS_core"/>
    <property type="match status" value="1"/>
</dbReference>
<dbReference type="CDD" id="cd04317">
    <property type="entry name" value="EcAspRS_like_N"/>
    <property type="match status" value="1"/>
</dbReference>
<dbReference type="Gene3D" id="3.30.930.10">
    <property type="entry name" value="Bira Bifunctional Protein, Domain 2"/>
    <property type="match status" value="1"/>
</dbReference>
<dbReference type="Gene3D" id="3.30.1360.30">
    <property type="entry name" value="GAD-like domain"/>
    <property type="match status" value="1"/>
</dbReference>
<dbReference type="Gene3D" id="2.40.50.140">
    <property type="entry name" value="Nucleic acid-binding proteins"/>
    <property type="match status" value="1"/>
</dbReference>
<dbReference type="HAMAP" id="MF_00044">
    <property type="entry name" value="Asp_tRNA_synth_type1"/>
    <property type="match status" value="1"/>
</dbReference>
<dbReference type="InterPro" id="IPR004364">
    <property type="entry name" value="Aa-tRNA-synt_II"/>
</dbReference>
<dbReference type="InterPro" id="IPR006195">
    <property type="entry name" value="aa-tRNA-synth_II"/>
</dbReference>
<dbReference type="InterPro" id="IPR045864">
    <property type="entry name" value="aa-tRNA-synth_II/BPL/LPL"/>
</dbReference>
<dbReference type="InterPro" id="IPR004524">
    <property type="entry name" value="Asp-tRNA-ligase_1"/>
</dbReference>
<dbReference type="InterPro" id="IPR047089">
    <property type="entry name" value="Asp-tRNA-ligase_1_N"/>
</dbReference>
<dbReference type="InterPro" id="IPR002312">
    <property type="entry name" value="Asp/Asn-tRNA-synth_IIb"/>
</dbReference>
<dbReference type="InterPro" id="IPR047090">
    <property type="entry name" value="AspRS_core"/>
</dbReference>
<dbReference type="InterPro" id="IPR004115">
    <property type="entry name" value="GAD-like_sf"/>
</dbReference>
<dbReference type="InterPro" id="IPR029351">
    <property type="entry name" value="GAD_dom"/>
</dbReference>
<dbReference type="InterPro" id="IPR012340">
    <property type="entry name" value="NA-bd_OB-fold"/>
</dbReference>
<dbReference type="InterPro" id="IPR004365">
    <property type="entry name" value="NA-bd_OB_tRNA"/>
</dbReference>
<dbReference type="NCBIfam" id="TIGR00459">
    <property type="entry name" value="aspS_bact"/>
    <property type="match status" value="1"/>
</dbReference>
<dbReference type="NCBIfam" id="NF001750">
    <property type="entry name" value="PRK00476.1"/>
    <property type="match status" value="1"/>
</dbReference>
<dbReference type="PANTHER" id="PTHR22594:SF5">
    <property type="entry name" value="ASPARTATE--TRNA LIGASE, MITOCHONDRIAL"/>
    <property type="match status" value="1"/>
</dbReference>
<dbReference type="PANTHER" id="PTHR22594">
    <property type="entry name" value="ASPARTYL/LYSYL-TRNA SYNTHETASE"/>
    <property type="match status" value="1"/>
</dbReference>
<dbReference type="Pfam" id="PF02938">
    <property type="entry name" value="GAD"/>
    <property type="match status" value="1"/>
</dbReference>
<dbReference type="Pfam" id="PF00152">
    <property type="entry name" value="tRNA-synt_2"/>
    <property type="match status" value="1"/>
</dbReference>
<dbReference type="Pfam" id="PF01336">
    <property type="entry name" value="tRNA_anti-codon"/>
    <property type="match status" value="1"/>
</dbReference>
<dbReference type="PRINTS" id="PR01042">
    <property type="entry name" value="TRNASYNTHASP"/>
</dbReference>
<dbReference type="SUPFAM" id="SSF55681">
    <property type="entry name" value="Class II aaRS and biotin synthetases"/>
    <property type="match status" value="1"/>
</dbReference>
<dbReference type="SUPFAM" id="SSF55261">
    <property type="entry name" value="GAD domain-like"/>
    <property type="match status" value="1"/>
</dbReference>
<dbReference type="SUPFAM" id="SSF50249">
    <property type="entry name" value="Nucleic acid-binding proteins"/>
    <property type="match status" value="1"/>
</dbReference>
<dbReference type="PROSITE" id="PS50862">
    <property type="entry name" value="AA_TRNA_LIGASE_II"/>
    <property type="match status" value="1"/>
</dbReference>
<name>SYDND_SALRD</name>
<proteinExistence type="inferred from homology"/>
<reference key="1">
    <citation type="journal article" date="2005" name="Proc. Natl. Acad. Sci. U.S.A.">
        <title>The genome of Salinibacter ruber: convergence and gene exchange among hyperhalophilic bacteria and archaea.</title>
        <authorList>
            <person name="Mongodin E.F."/>
            <person name="Nelson K.E."/>
            <person name="Daugherty S."/>
            <person name="DeBoy R.T."/>
            <person name="Wister J."/>
            <person name="Khouri H."/>
            <person name="Weidman J."/>
            <person name="Walsh D.A."/>
            <person name="Papke R.T."/>
            <person name="Sanchez Perez G."/>
            <person name="Sharma A.K."/>
            <person name="Nesbo C.L."/>
            <person name="MacLeod D."/>
            <person name="Bapteste E."/>
            <person name="Doolittle W.F."/>
            <person name="Charlebois R.L."/>
            <person name="Legault B."/>
            <person name="Rodriguez-Valera F."/>
        </authorList>
    </citation>
    <scope>NUCLEOTIDE SEQUENCE [LARGE SCALE GENOMIC DNA]</scope>
    <source>
        <strain>DSM 13855 / CECT 5946 / M31</strain>
    </source>
</reference>
<evidence type="ECO:0000255" key="1">
    <source>
        <dbReference type="HAMAP-Rule" id="MF_00044"/>
    </source>
</evidence>
<evidence type="ECO:0000256" key="2">
    <source>
        <dbReference type="SAM" id="MobiDB-lite"/>
    </source>
</evidence>
<comment type="function">
    <text evidence="1">Aspartyl-tRNA synthetase with relaxed tRNA specificity since it is able to aspartylate not only its cognate tRNA(Asp) but also tRNA(Asn). Reaction proceeds in two steps: L-aspartate is first activated by ATP to form Asp-AMP and then transferred to the acceptor end of tRNA(Asp/Asn).</text>
</comment>
<comment type="catalytic activity">
    <reaction evidence="1">
        <text>tRNA(Asx) + L-aspartate + ATP = L-aspartyl-tRNA(Asx) + AMP + diphosphate</text>
        <dbReference type="Rhea" id="RHEA:18349"/>
        <dbReference type="Rhea" id="RHEA-COMP:9710"/>
        <dbReference type="Rhea" id="RHEA-COMP:9711"/>
        <dbReference type="ChEBI" id="CHEBI:29991"/>
        <dbReference type="ChEBI" id="CHEBI:30616"/>
        <dbReference type="ChEBI" id="CHEBI:33019"/>
        <dbReference type="ChEBI" id="CHEBI:78442"/>
        <dbReference type="ChEBI" id="CHEBI:78516"/>
        <dbReference type="ChEBI" id="CHEBI:456215"/>
        <dbReference type="EC" id="6.1.1.23"/>
    </reaction>
</comment>
<comment type="subunit">
    <text evidence="1">Homodimer.</text>
</comment>
<comment type="subcellular location">
    <subcellularLocation>
        <location evidence="1">Cytoplasm</location>
    </subcellularLocation>
</comment>
<comment type="similarity">
    <text evidence="1">Belongs to the class-II aminoacyl-tRNA synthetase family. Type 1 subfamily.</text>
</comment>
<gene>
    <name evidence="1" type="primary">aspS</name>
    <name type="ordered locus">SRU_1963</name>
</gene>
<sequence length="629" mass="70304">MERSSRADLISEDSHPARTHTCGDLRAEDNGEAVVLKGWVDTRRDHGGLVFVDLRDRYGLTQVVFSPQDNQTAYEVAGQLRREDVISVQGTVRPRGEEAVNPDLPTGAIEVSADDLAVLNTSETPPFVVSAHEERQMNTNEDLRLAHRYLDLRRPDLQENIELRHRLYQTTHRYFDAHDFLEVETPVLMKSTPEGARDFLVPSRLHPGRFYALPQSPQTYKQLLMVGGLDRYVQIVKCFRDEDLRADRQPEFTQIDVEMTFATEEQVYELTEGLMADLWDTLEDTTLETPFPRMTYDEALRTYGTDKPDLRFDLELHDVSDCFAGSGFRVFDSIVDDGGHIVALRVPGEGDRGRAAMDRLEDHVTDEIGAAGLIYFQLPSDGSGIEQNLSSDALPHEYGRAAAEQVGAEAGDLVLTLAGHSPTVFEQAGALRLHMGEELGLRPPADEGDDAFLWVTDFPLMEYDEEAGRPVSMHHPFTAPHPDDLDRLDEDPTQVQARAYDLVLNGNEIGGGSIRIHNHETQMQVFDVLGIDEEEAQDRFGFLLDALRYGAPPHGGIALGLDRLVMLLAGADSLRDVIAFPKTQSGKEPMVKSPDWVDPEQLETLALRLDLPPDVEPPARIAQRKRLAS</sequence>
<organism>
    <name type="scientific">Salinibacter ruber (strain DSM 13855 / M31)</name>
    <dbReference type="NCBI Taxonomy" id="309807"/>
    <lineage>
        <taxon>Bacteria</taxon>
        <taxon>Pseudomonadati</taxon>
        <taxon>Rhodothermota</taxon>
        <taxon>Rhodothermia</taxon>
        <taxon>Rhodothermales</taxon>
        <taxon>Salinibacteraceae</taxon>
        <taxon>Salinibacter</taxon>
    </lineage>
</organism>
<accession>Q2S158</accession>
<feature type="chain" id="PRO_0000235554" description="Aspartate--tRNA(Asp/Asn) ligase">
    <location>
        <begin position="1"/>
        <end position="629"/>
    </location>
</feature>
<feature type="region of interest" description="Disordered" evidence="2">
    <location>
        <begin position="1"/>
        <end position="24"/>
    </location>
</feature>
<feature type="region of interest" description="Aspartate" evidence="1">
    <location>
        <begin position="218"/>
        <end position="221"/>
    </location>
</feature>
<feature type="compositionally biased region" description="Basic and acidic residues" evidence="2">
    <location>
        <begin position="12"/>
        <end position="24"/>
    </location>
</feature>
<feature type="binding site" evidence="1">
    <location>
        <position position="194"/>
    </location>
    <ligand>
        <name>L-aspartate</name>
        <dbReference type="ChEBI" id="CHEBI:29991"/>
    </ligand>
</feature>
<feature type="binding site" evidence="1">
    <location>
        <begin position="240"/>
        <end position="242"/>
    </location>
    <ligand>
        <name>ATP</name>
        <dbReference type="ChEBI" id="CHEBI:30616"/>
    </ligand>
</feature>
<feature type="binding site" evidence="1">
    <location>
        <position position="240"/>
    </location>
    <ligand>
        <name>L-aspartate</name>
        <dbReference type="ChEBI" id="CHEBI:29991"/>
    </ligand>
</feature>
<feature type="binding site" evidence="1">
    <location>
        <position position="249"/>
    </location>
    <ligand>
        <name>ATP</name>
        <dbReference type="ChEBI" id="CHEBI:30616"/>
    </ligand>
</feature>
<feature type="binding site" evidence="1">
    <location>
        <position position="474"/>
    </location>
    <ligand>
        <name>L-aspartate</name>
        <dbReference type="ChEBI" id="CHEBI:29991"/>
    </ligand>
</feature>
<feature type="binding site" evidence="1">
    <location>
        <position position="508"/>
    </location>
    <ligand>
        <name>ATP</name>
        <dbReference type="ChEBI" id="CHEBI:30616"/>
    </ligand>
</feature>
<feature type="binding site" evidence="1">
    <location>
        <position position="515"/>
    </location>
    <ligand>
        <name>L-aspartate</name>
        <dbReference type="ChEBI" id="CHEBI:29991"/>
    </ligand>
</feature>
<feature type="binding site" evidence="1">
    <location>
        <begin position="560"/>
        <end position="563"/>
    </location>
    <ligand>
        <name>ATP</name>
        <dbReference type="ChEBI" id="CHEBI:30616"/>
    </ligand>
</feature>
<feature type="site" description="Important for tRNA non-discrimination" evidence="1">
    <location>
        <position position="46"/>
    </location>
</feature>